<organism>
    <name type="scientific">Shewanella baltica (strain OS155 / ATCC BAA-1091)</name>
    <dbReference type="NCBI Taxonomy" id="325240"/>
    <lineage>
        <taxon>Bacteria</taxon>
        <taxon>Pseudomonadati</taxon>
        <taxon>Pseudomonadota</taxon>
        <taxon>Gammaproteobacteria</taxon>
        <taxon>Alteromonadales</taxon>
        <taxon>Shewanellaceae</taxon>
        <taxon>Shewanella</taxon>
    </lineage>
</organism>
<evidence type="ECO:0000255" key="1">
    <source>
        <dbReference type="HAMAP-Rule" id="MF_00173"/>
    </source>
</evidence>
<accession>A3D074</accession>
<gene>
    <name evidence="1" type="primary">argR</name>
    <name type="ordered locus">Sbal_0608</name>
</gene>
<keyword id="KW-0028">Amino-acid biosynthesis</keyword>
<keyword id="KW-0055">Arginine biosynthesis</keyword>
<keyword id="KW-0963">Cytoplasm</keyword>
<keyword id="KW-0238">DNA-binding</keyword>
<keyword id="KW-1185">Reference proteome</keyword>
<keyword id="KW-0678">Repressor</keyword>
<keyword id="KW-0804">Transcription</keyword>
<keyword id="KW-0805">Transcription regulation</keyword>
<reference key="1">
    <citation type="submission" date="2007-02" db="EMBL/GenBank/DDBJ databases">
        <title>Complete sequence of chromosome of Shewanella baltica OS155.</title>
        <authorList>
            <consortium name="US DOE Joint Genome Institute"/>
            <person name="Copeland A."/>
            <person name="Lucas S."/>
            <person name="Lapidus A."/>
            <person name="Barry K."/>
            <person name="Detter J.C."/>
            <person name="Glavina del Rio T."/>
            <person name="Hammon N."/>
            <person name="Israni S."/>
            <person name="Dalin E."/>
            <person name="Tice H."/>
            <person name="Pitluck S."/>
            <person name="Sims D.R."/>
            <person name="Brettin T."/>
            <person name="Bruce D."/>
            <person name="Han C."/>
            <person name="Tapia R."/>
            <person name="Brainard J."/>
            <person name="Schmutz J."/>
            <person name="Larimer F."/>
            <person name="Land M."/>
            <person name="Hauser L."/>
            <person name="Kyrpides N."/>
            <person name="Mikhailova N."/>
            <person name="Brettar I."/>
            <person name="Klappenbach J."/>
            <person name="Konstantinidis K."/>
            <person name="Rodrigues J."/>
            <person name="Tiedje J."/>
            <person name="Richardson P."/>
        </authorList>
    </citation>
    <scope>NUCLEOTIDE SEQUENCE [LARGE SCALE GENOMIC DNA]</scope>
    <source>
        <strain>OS155 / ATCC BAA-1091</strain>
    </source>
</reference>
<proteinExistence type="inferred from homology"/>
<sequence length="156" mass="16955">MQTTKNQDDLVRIFKSILKEERFGSQSEIVTALQAEGFGNINQSKVSRMLSKFGAVRTRNAKQEMVYCLPAELGVPTAGSPLKNLVLDVDHNQAMIVVRTSPGAAQLIARLLDSIGKPEGILGTIAGDDTIFICPSSIQDIADTLETIKSLFNYAE</sequence>
<feature type="chain" id="PRO_1000023588" description="Arginine repressor">
    <location>
        <begin position="1"/>
        <end position="156"/>
    </location>
</feature>
<dbReference type="EMBL" id="CP000563">
    <property type="protein sequence ID" value="ABN60137.1"/>
    <property type="molecule type" value="Genomic_DNA"/>
</dbReference>
<dbReference type="RefSeq" id="WP_006080175.1">
    <property type="nucleotide sequence ID" value="NC_009052.1"/>
</dbReference>
<dbReference type="SMR" id="A3D074"/>
<dbReference type="STRING" id="325240.Sbal_0608"/>
<dbReference type="GeneID" id="11773825"/>
<dbReference type="KEGG" id="sbl:Sbal_0608"/>
<dbReference type="HOGENOM" id="CLU_097103_2_0_6"/>
<dbReference type="OrthoDB" id="7060358at2"/>
<dbReference type="UniPathway" id="UPA00068"/>
<dbReference type="Proteomes" id="UP000001557">
    <property type="component" value="Chromosome"/>
</dbReference>
<dbReference type="GO" id="GO:0005737">
    <property type="term" value="C:cytoplasm"/>
    <property type="evidence" value="ECO:0007669"/>
    <property type="project" value="UniProtKB-SubCell"/>
</dbReference>
<dbReference type="GO" id="GO:0034618">
    <property type="term" value="F:arginine binding"/>
    <property type="evidence" value="ECO:0007669"/>
    <property type="project" value="InterPro"/>
</dbReference>
<dbReference type="GO" id="GO:0003677">
    <property type="term" value="F:DNA binding"/>
    <property type="evidence" value="ECO:0007669"/>
    <property type="project" value="UniProtKB-KW"/>
</dbReference>
<dbReference type="GO" id="GO:0003700">
    <property type="term" value="F:DNA-binding transcription factor activity"/>
    <property type="evidence" value="ECO:0007669"/>
    <property type="project" value="UniProtKB-UniRule"/>
</dbReference>
<dbReference type="GO" id="GO:0006526">
    <property type="term" value="P:L-arginine biosynthetic process"/>
    <property type="evidence" value="ECO:0007669"/>
    <property type="project" value="UniProtKB-UniPathway"/>
</dbReference>
<dbReference type="GO" id="GO:0051259">
    <property type="term" value="P:protein complex oligomerization"/>
    <property type="evidence" value="ECO:0007669"/>
    <property type="project" value="InterPro"/>
</dbReference>
<dbReference type="GO" id="GO:1900079">
    <property type="term" value="P:regulation of arginine biosynthetic process"/>
    <property type="evidence" value="ECO:0007669"/>
    <property type="project" value="UniProtKB-UniRule"/>
</dbReference>
<dbReference type="Gene3D" id="3.30.1360.40">
    <property type="match status" value="1"/>
</dbReference>
<dbReference type="Gene3D" id="1.10.10.10">
    <property type="entry name" value="Winged helix-like DNA-binding domain superfamily/Winged helix DNA-binding domain"/>
    <property type="match status" value="1"/>
</dbReference>
<dbReference type="HAMAP" id="MF_00173">
    <property type="entry name" value="Arg_repressor"/>
    <property type="match status" value="1"/>
</dbReference>
<dbReference type="InterPro" id="IPR001669">
    <property type="entry name" value="Arg_repress"/>
</dbReference>
<dbReference type="InterPro" id="IPR020899">
    <property type="entry name" value="Arg_repress_C"/>
</dbReference>
<dbReference type="InterPro" id="IPR036251">
    <property type="entry name" value="Arg_repress_C_sf"/>
</dbReference>
<dbReference type="InterPro" id="IPR020900">
    <property type="entry name" value="Arg_repress_DNA-bd"/>
</dbReference>
<dbReference type="InterPro" id="IPR036388">
    <property type="entry name" value="WH-like_DNA-bd_sf"/>
</dbReference>
<dbReference type="InterPro" id="IPR036390">
    <property type="entry name" value="WH_DNA-bd_sf"/>
</dbReference>
<dbReference type="NCBIfam" id="TIGR01529">
    <property type="entry name" value="argR_whole"/>
    <property type="match status" value="1"/>
</dbReference>
<dbReference type="NCBIfam" id="NF003457">
    <property type="entry name" value="PRK05066.1"/>
    <property type="match status" value="1"/>
</dbReference>
<dbReference type="PANTHER" id="PTHR34471">
    <property type="entry name" value="ARGININE REPRESSOR"/>
    <property type="match status" value="1"/>
</dbReference>
<dbReference type="PANTHER" id="PTHR34471:SF1">
    <property type="entry name" value="ARGININE REPRESSOR"/>
    <property type="match status" value="1"/>
</dbReference>
<dbReference type="Pfam" id="PF01316">
    <property type="entry name" value="Arg_repressor"/>
    <property type="match status" value="1"/>
</dbReference>
<dbReference type="Pfam" id="PF02863">
    <property type="entry name" value="Arg_repressor_C"/>
    <property type="match status" value="1"/>
</dbReference>
<dbReference type="PRINTS" id="PR01467">
    <property type="entry name" value="ARGREPRESSOR"/>
</dbReference>
<dbReference type="SUPFAM" id="SSF55252">
    <property type="entry name" value="C-terminal domain of arginine repressor"/>
    <property type="match status" value="1"/>
</dbReference>
<dbReference type="SUPFAM" id="SSF46785">
    <property type="entry name" value="Winged helix' DNA-binding domain"/>
    <property type="match status" value="1"/>
</dbReference>
<comment type="function">
    <text evidence="1">Regulates arginine biosynthesis genes.</text>
</comment>
<comment type="pathway">
    <text>Amino-acid biosynthesis; L-arginine biosynthesis [regulation].</text>
</comment>
<comment type="subcellular location">
    <subcellularLocation>
        <location evidence="1">Cytoplasm</location>
    </subcellularLocation>
</comment>
<comment type="similarity">
    <text evidence="1">Belongs to the ArgR family.</text>
</comment>
<name>ARGR_SHEB5</name>
<protein>
    <recommendedName>
        <fullName evidence="1">Arginine repressor</fullName>
    </recommendedName>
</protein>